<sequence>MDGFDKTMKFSIQDEKQSVHVNDVLLTVYDALQEKGYNPINQIVGYLLSGDPAYIPRHKDARSIIRKLERDELIEELVKSYLKHHREE</sequence>
<organism>
    <name type="scientific">Bacillus cereus (strain ZK / E33L)</name>
    <dbReference type="NCBI Taxonomy" id="288681"/>
    <lineage>
        <taxon>Bacteria</taxon>
        <taxon>Bacillati</taxon>
        <taxon>Bacillota</taxon>
        <taxon>Bacilli</taxon>
        <taxon>Bacillales</taxon>
        <taxon>Bacillaceae</taxon>
        <taxon>Bacillus</taxon>
        <taxon>Bacillus cereus group</taxon>
    </lineage>
</organism>
<evidence type="ECO:0000255" key="1">
    <source>
        <dbReference type="HAMAP-Rule" id="MF_01507"/>
    </source>
</evidence>
<comment type="similarity">
    <text evidence="1">Belongs to the UPF0297 family.</text>
</comment>
<reference key="1">
    <citation type="journal article" date="2006" name="J. Bacteriol.">
        <title>Pathogenomic sequence analysis of Bacillus cereus and Bacillus thuringiensis isolates closely related to Bacillus anthracis.</title>
        <authorList>
            <person name="Han C.S."/>
            <person name="Xie G."/>
            <person name="Challacombe J.F."/>
            <person name="Altherr M.R."/>
            <person name="Bhotika S.S."/>
            <person name="Bruce D."/>
            <person name="Campbell C.S."/>
            <person name="Campbell M.L."/>
            <person name="Chen J."/>
            <person name="Chertkov O."/>
            <person name="Cleland C."/>
            <person name="Dimitrijevic M."/>
            <person name="Doggett N.A."/>
            <person name="Fawcett J.J."/>
            <person name="Glavina T."/>
            <person name="Goodwin L.A."/>
            <person name="Hill K.K."/>
            <person name="Hitchcock P."/>
            <person name="Jackson P.J."/>
            <person name="Keim P."/>
            <person name="Kewalramani A.R."/>
            <person name="Longmire J."/>
            <person name="Lucas S."/>
            <person name="Malfatti S."/>
            <person name="McMurry K."/>
            <person name="Meincke L.J."/>
            <person name="Misra M."/>
            <person name="Moseman B.L."/>
            <person name="Mundt M."/>
            <person name="Munk A.C."/>
            <person name="Okinaka R.T."/>
            <person name="Parson-Quintana B."/>
            <person name="Reilly L.P."/>
            <person name="Richardson P."/>
            <person name="Robinson D.L."/>
            <person name="Rubin E."/>
            <person name="Saunders E."/>
            <person name="Tapia R."/>
            <person name="Tesmer J.G."/>
            <person name="Thayer N."/>
            <person name="Thompson L.S."/>
            <person name="Tice H."/>
            <person name="Ticknor L.O."/>
            <person name="Wills P.L."/>
            <person name="Brettin T.S."/>
            <person name="Gilna P."/>
        </authorList>
    </citation>
    <scope>NUCLEOTIDE SEQUENCE [LARGE SCALE GENOMIC DNA]</scope>
    <source>
        <strain>ZK / E33L</strain>
    </source>
</reference>
<accession>Q634F7</accession>
<gene>
    <name type="ordered locus">BCE33L4131</name>
</gene>
<feature type="chain" id="PRO_0000216959" description="UPF0297 protein BCE33L4131">
    <location>
        <begin position="1"/>
        <end position="88"/>
    </location>
</feature>
<proteinExistence type="inferred from homology"/>
<dbReference type="EMBL" id="CP000001">
    <property type="protein sequence ID" value="AAU16137.1"/>
    <property type="molecule type" value="Genomic_DNA"/>
</dbReference>
<dbReference type="RefSeq" id="WP_000348590.1">
    <property type="nucleotide sequence ID" value="NC_006274.1"/>
</dbReference>
<dbReference type="SMR" id="Q634F7"/>
<dbReference type="KEGG" id="bcz:BCE33L4131"/>
<dbReference type="Proteomes" id="UP000002612">
    <property type="component" value="Chromosome"/>
</dbReference>
<dbReference type="HAMAP" id="MF_01507">
    <property type="entry name" value="UPF0297"/>
    <property type="match status" value="1"/>
</dbReference>
<dbReference type="InterPro" id="IPR009309">
    <property type="entry name" value="IreB"/>
</dbReference>
<dbReference type="NCBIfam" id="NF003997">
    <property type="entry name" value="PRK05473.1"/>
    <property type="match status" value="1"/>
</dbReference>
<dbReference type="PANTHER" id="PTHR40067">
    <property type="entry name" value="UPF0297 PROTEIN YRZL"/>
    <property type="match status" value="1"/>
</dbReference>
<dbReference type="PANTHER" id="PTHR40067:SF1">
    <property type="entry name" value="UPF0297 PROTEIN YRZL"/>
    <property type="match status" value="1"/>
</dbReference>
<dbReference type="Pfam" id="PF06135">
    <property type="entry name" value="IreB"/>
    <property type="match status" value="1"/>
</dbReference>
<dbReference type="PIRSF" id="PIRSF037258">
    <property type="entry name" value="DUF965_bac"/>
    <property type="match status" value="1"/>
</dbReference>
<protein>
    <recommendedName>
        <fullName evidence="1">UPF0297 protein BCE33L4131</fullName>
    </recommendedName>
</protein>
<name>Y4131_BACCZ</name>